<keyword id="KW-0067">ATP-binding</keyword>
<keyword id="KW-0378">Hydrolase</keyword>
<keyword id="KW-0479">Metal-binding</keyword>
<keyword id="KW-0482">Metalloprotease</keyword>
<keyword id="KW-0496">Mitochondrion</keyword>
<keyword id="KW-0547">Nucleotide-binding</keyword>
<keyword id="KW-0645">Protease</keyword>
<keyword id="KW-1185">Reference proteome</keyword>
<keyword id="KW-0809">Transit peptide</keyword>
<keyword id="KW-0862">Zinc</keyword>
<evidence type="ECO:0000250" key="1"/>
<evidence type="ECO:0000255" key="2"/>
<evidence type="ECO:0000256" key="3">
    <source>
        <dbReference type="SAM" id="MobiDB-lite"/>
    </source>
</evidence>
<evidence type="ECO:0000305" key="4"/>
<organism>
    <name type="scientific">Oryza sativa subsp. japonica</name>
    <name type="common">Rice</name>
    <dbReference type="NCBI Taxonomy" id="39947"/>
    <lineage>
        <taxon>Eukaryota</taxon>
        <taxon>Viridiplantae</taxon>
        <taxon>Streptophyta</taxon>
        <taxon>Embryophyta</taxon>
        <taxon>Tracheophyta</taxon>
        <taxon>Spermatophyta</taxon>
        <taxon>Magnoliopsida</taxon>
        <taxon>Liliopsida</taxon>
        <taxon>Poales</taxon>
        <taxon>Poaceae</taxon>
        <taxon>BOP clade</taxon>
        <taxon>Oryzoideae</taxon>
        <taxon>Oryzeae</taxon>
        <taxon>Oryzinae</taxon>
        <taxon>Oryza</taxon>
        <taxon>Oryza sativa</taxon>
    </lineage>
</organism>
<accession>Q0DHL4</accession>
<accession>A0A0P0WNE6</accession>
<accession>A3B4S3</accession>
<accession>Q65XF9</accession>
<dbReference type="EC" id="3.4.24.-"/>
<dbReference type="EMBL" id="AC105770">
    <property type="protein sequence ID" value="AAU44017.1"/>
    <property type="status" value="ALT_SEQ"/>
    <property type="molecule type" value="Genomic_DNA"/>
</dbReference>
<dbReference type="EMBL" id="AP008211">
    <property type="protein sequence ID" value="BAF17659.1"/>
    <property type="molecule type" value="Genomic_DNA"/>
</dbReference>
<dbReference type="EMBL" id="AP014961">
    <property type="protein sequence ID" value="BAS94386.1"/>
    <property type="molecule type" value="Genomic_DNA"/>
</dbReference>
<dbReference type="EMBL" id="CM000142">
    <property type="status" value="NOT_ANNOTATED_CDS"/>
    <property type="molecule type" value="Genomic_DNA"/>
</dbReference>
<dbReference type="RefSeq" id="XP_015639995.1">
    <property type="nucleotide sequence ID" value="XM_015784509.1"/>
</dbReference>
<dbReference type="SMR" id="Q0DHL4"/>
<dbReference type="FunCoup" id="Q0DHL4">
    <property type="interactions" value="2686"/>
</dbReference>
<dbReference type="STRING" id="39947.Q0DHL4"/>
<dbReference type="MEROPS" id="M41.023"/>
<dbReference type="PaxDb" id="39947-Q0DHL4"/>
<dbReference type="EnsemblPlants" id="Os05t0458400-01">
    <property type="protein sequence ID" value="Os05t0458400-01"/>
    <property type="gene ID" value="Os05g0458400"/>
</dbReference>
<dbReference type="Gramene" id="Os05t0458400-01">
    <property type="protein sequence ID" value="Os05t0458400-01"/>
    <property type="gene ID" value="Os05g0458400"/>
</dbReference>
<dbReference type="KEGG" id="dosa:Os05g0458400"/>
<dbReference type="eggNOG" id="KOG0731">
    <property type="taxonomic scope" value="Eukaryota"/>
</dbReference>
<dbReference type="HOGENOM" id="CLU_000688_23_2_1"/>
<dbReference type="InParanoid" id="Q0DHL4"/>
<dbReference type="OMA" id="ARQKGNF"/>
<dbReference type="OrthoDB" id="1413014at2759"/>
<dbReference type="Proteomes" id="UP000000763">
    <property type="component" value="Chromosome 5"/>
</dbReference>
<dbReference type="Proteomes" id="UP000007752">
    <property type="component" value="Chromosome 5"/>
</dbReference>
<dbReference type="Proteomes" id="UP000059680">
    <property type="component" value="Chromosome 5"/>
</dbReference>
<dbReference type="GO" id="GO:0005745">
    <property type="term" value="C:m-AAA complex"/>
    <property type="evidence" value="ECO:0000318"/>
    <property type="project" value="GO_Central"/>
</dbReference>
<dbReference type="GO" id="GO:0005524">
    <property type="term" value="F:ATP binding"/>
    <property type="evidence" value="ECO:0007669"/>
    <property type="project" value="UniProtKB-KW"/>
</dbReference>
<dbReference type="GO" id="GO:0016887">
    <property type="term" value="F:ATP hydrolysis activity"/>
    <property type="evidence" value="ECO:0007669"/>
    <property type="project" value="InterPro"/>
</dbReference>
<dbReference type="GO" id="GO:0004176">
    <property type="term" value="F:ATP-dependent peptidase activity"/>
    <property type="evidence" value="ECO:0007669"/>
    <property type="project" value="InterPro"/>
</dbReference>
<dbReference type="GO" id="GO:0004222">
    <property type="term" value="F:metalloendopeptidase activity"/>
    <property type="evidence" value="ECO:0000318"/>
    <property type="project" value="GO_Central"/>
</dbReference>
<dbReference type="GO" id="GO:0008270">
    <property type="term" value="F:zinc ion binding"/>
    <property type="evidence" value="ECO:0007669"/>
    <property type="project" value="InterPro"/>
</dbReference>
<dbReference type="GO" id="GO:0034982">
    <property type="term" value="P:mitochondrial protein processing"/>
    <property type="evidence" value="ECO:0000318"/>
    <property type="project" value="GO_Central"/>
</dbReference>
<dbReference type="CDD" id="cd19501">
    <property type="entry name" value="RecA-like_FtsH"/>
    <property type="match status" value="1"/>
</dbReference>
<dbReference type="FunFam" id="1.10.8.60:FF:000019">
    <property type="entry name" value="AFG3-like AAA ATPase 2"/>
    <property type="match status" value="1"/>
</dbReference>
<dbReference type="FunFam" id="3.40.50.300:FF:000001">
    <property type="entry name" value="ATP-dependent zinc metalloprotease FtsH"/>
    <property type="match status" value="1"/>
</dbReference>
<dbReference type="FunFam" id="3.40.1690.20:FF:000004">
    <property type="entry name" value="ATP-dependent zinc metalloprotease FTSH 10 mitochondrial"/>
    <property type="match status" value="1"/>
</dbReference>
<dbReference type="FunFam" id="1.20.58.760:FF:000005">
    <property type="entry name" value="ATP-dependent zinc metalloprotease FTSH 10, mitochondrial"/>
    <property type="match status" value="1"/>
</dbReference>
<dbReference type="Gene3D" id="1.10.8.60">
    <property type="match status" value="1"/>
</dbReference>
<dbReference type="Gene3D" id="3.40.1690.20">
    <property type="match status" value="1"/>
</dbReference>
<dbReference type="Gene3D" id="3.40.50.300">
    <property type="entry name" value="P-loop containing nucleotide triphosphate hydrolases"/>
    <property type="match status" value="1"/>
</dbReference>
<dbReference type="Gene3D" id="1.20.58.760">
    <property type="entry name" value="Peptidase M41"/>
    <property type="match status" value="1"/>
</dbReference>
<dbReference type="HAMAP" id="MF_01458">
    <property type="entry name" value="FtsH"/>
    <property type="match status" value="1"/>
</dbReference>
<dbReference type="InterPro" id="IPR003593">
    <property type="entry name" value="AAA+_ATPase"/>
</dbReference>
<dbReference type="InterPro" id="IPR041569">
    <property type="entry name" value="AAA_lid_3"/>
</dbReference>
<dbReference type="InterPro" id="IPR050928">
    <property type="entry name" value="ATP-dep_Zn_Metalloprotease"/>
</dbReference>
<dbReference type="InterPro" id="IPR003959">
    <property type="entry name" value="ATPase_AAA_core"/>
</dbReference>
<dbReference type="InterPro" id="IPR003960">
    <property type="entry name" value="ATPase_AAA_CS"/>
</dbReference>
<dbReference type="InterPro" id="IPR005936">
    <property type="entry name" value="FtsH"/>
</dbReference>
<dbReference type="InterPro" id="IPR027417">
    <property type="entry name" value="P-loop_NTPase"/>
</dbReference>
<dbReference type="InterPro" id="IPR011546">
    <property type="entry name" value="Pept_M41_FtsH_extracell"/>
</dbReference>
<dbReference type="InterPro" id="IPR000642">
    <property type="entry name" value="Peptidase_M41"/>
</dbReference>
<dbReference type="InterPro" id="IPR037219">
    <property type="entry name" value="Peptidase_M41-like"/>
</dbReference>
<dbReference type="NCBIfam" id="TIGR01241">
    <property type="entry name" value="FtsH_fam"/>
    <property type="match status" value="1"/>
</dbReference>
<dbReference type="PANTHER" id="PTHR43655:SF2">
    <property type="entry name" value="AFG3 LIKE MATRIX AAA PEPTIDASE SUBUNIT 2, ISOFORM A"/>
    <property type="match status" value="1"/>
</dbReference>
<dbReference type="PANTHER" id="PTHR43655">
    <property type="entry name" value="ATP-DEPENDENT PROTEASE"/>
    <property type="match status" value="1"/>
</dbReference>
<dbReference type="Pfam" id="PF00004">
    <property type="entry name" value="AAA"/>
    <property type="match status" value="1"/>
</dbReference>
<dbReference type="Pfam" id="PF17862">
    <property type="entry name" value="AAA_lid_3"/>
    <property type="match status" value="1"/>
</dbReference>
<dbReference type="Pfam" id="PF06480">
    <property type="entry name" value="FtsH_ext"/>
    <property type="match status" value="1"/>
</dbReference>
<dbReference type="Pfam" id="PF01434">
    <property type="entry name" value="Peptidase_M41"/>
    <property type="match status" value="1"/>
</dbReference>
<dbReference type="SMART" id="SM00382">
    <property type="entry name" value="AAA"/>
    <property type="match status" value="1"/>
</dbReference>
<dbReference type="SUPFAM" id="SSF140990">
    <property type="entry name" value="FtsH protease domain-like"/>
    <property type="match status" value="1"/>
</dbReference>
<dbReference type="SUPFAM" id="SSF52540">
    <property type="entry name" value="P-loop containing nucleoside triphosphate hydrolases"/>
    <property type="match status" value="1"/>
</dbReference>
<dbReference type="PROSITE" id="PS00674">
    <property type="entry name" value="AAA"/>
    <property type="match status" value="1"/>
</dbReference>
<comment type="function">
    <text evidence="1">Probable ATP-dependent zinc metallopeptidase.</text>
</comment>
<comment type="cofactor">
    <cofactor evidence="1">
        <name>Zn(2+)</name>
        <dbReference type="ChEBI" id="CHEBI:29105"/>
    </cofactor>
    <text evidence="1">Binds 1 zinc ion per subunit.</text>
</comment>
<comment type="subcellular location">
    <subcellularLocation>
        <location evidence="1">Mitochondrion</location>
    </subcellularLocation>
</comment>
<comment type="similarity">
    <text evidence="4">In the N-terminal section; belongs to the AAA ATPase family.</text>
</comment>
<comment type="similarity">
    <text evidence="4">In the C-terminal section; belongs to the peptidase M41 family.</text>
</comment>
<comment type="sequence caution" evidence="4">
    <conflict type="erroneous gene model prediction">
        <sequence resource="EMBL-CDS" id="AAU44017"/>
    </conflict>
</comment>
<sequence>MSLASLARALSRRSAPSSSRARQGFSLGGLGGTTRSPPPPSSPLPSLHGGEGGGLGLGFVRGYLTAALGRPAAVKAGTDWRSILANPQFRRLFSDGSKKNYENYYPKGKKEAPKGDGSNKSDSKQDSSTDDQWNFQETASKQLQNFLAPLLFLGLMLSSLSSSSSDQKEISFQEFKNKLLEPGLVDRIVVSNKSVAKVYVRSSPQSNSQGQNTDAIITTNDVPSKHTPSRYKYYFNIGSVDSFEEKLEEAQEALGVDPHDFVPVTYVAEVNWFQEVMRFAPTVFLVGLIYLMSKRMQSGFNIGGGPGKGGRGIFNIGKAQVTKMDKNSKNKVFFKDVAGCDEAKQEIMEFVHFLKNPKKYEELGAKIPKGALLVGPPGTGKTLLAKATAGESGVPFLSISGSDFMEMFVGVGPSRVRNLFQEARQCAPSIIFIDEIDAIGRARGRGGFSGSNDERESTLNQLLVEMDGFGTTSGVVVLAGTNRPDILDKALLRPGRFDRQITIDKPDIKGRDQIFRIYLKKLKLDNEPSFYSQRLAALTPGFAGADIANVCNEAALIAARSEETQITMQHFESAIDRIIGGLEKKNKVISKLERRTVAYHESGHAVAGWFLEHAEPLLKVTIVPRGTAALGFAQYVPNENLLMTKEQLFDMTCMTLGGRAAEEVLIGRISTGAQNDLEKVTKMTYAQVAVYGFSEKVGLLSFPQRDDGFEMTKPYSNQTASIIDDEVREWVGKAYKKTVELITEHKEQVAKIAEMLLEKEVLHQDDLVRVLGERPFKASEPTNYDLFKQGFQDEEDSKNQEAAKTPQPDDDGTPSLGEVVPT</sequence>
<feature type="transit peptide" description="Mitochondrion" evidence="2">
    <location>
        <begin position="1"/>
        <end position="93"/>
    </location>
</feature>
<feature type="chain" id="PRO_0000341344" description="ATP-dependent zinc metalloprotease FTSH 8, mitochondrial">
    <location>
        <begin position="94"/>
        <end position="822"/>
    </location>
</feature>
<feature type="region of interest" description="Disordered" evidence="3">
    <location>
        <begin position="1"/>
        <end position="50"/>
    </location>
</feature>
<feature type="region of interest" description="Disordered" evidence="3">
    <location>
        <begin position="103"/>
        <end position="131"/>
    </location>
</feature>
<feature type="region of interest" description="Disordered" evidence="3">
    <location>
        <begin position="202"/>
        <end position="221"/>
    </location>
</feature>
<feature type="region of interest" description="Disordered" evidence="3">
    <location>
        <begin position="781"/>
        <end position="822"/>
    </location>
</feature>
<feature type="compositionally biased region" description="Low complexity" evidence="3">
    <location>
        <begin position="1"/>
        <end position="25"/>
    </location>
</feature>
<feature type="compositionally biased region" description="Basic and acidic residues" evidence="3">
    <location>
        <begin position="108"/>
        <end position="127"/>
    </location>
</feature>
<feature type="active site" evidence="1">
    <location>
        <position position="601"/>
    </location>
</feature>
<feature type="binding site" evidence="2">
    <location>
        <begin position="375"/>
        <end position="382"/>
    </location>
    <ligand>
        <name>ATP</name>
        <dbReference type="ChEBI" id="CHEBI:30616"/>
    </ligand>
</feature>
<feature type="binding site" evidence="1">
    <location>
        <position position="600"/>
    </location>
    <ligand>
        <name>Zn(2+)</name>
        <dbReference type="ChEBI" id="CHEBI:29105"/>
        <note>catalytic</note>
    </ligand>
</feature>
<feature type="binding site" evidence="1">
    <location>
        <position position="604"/>
    </location>
    <ligand>
        <name>Zn(2+)</name>
        <dbReference type="ChEBI" id="CHEBI:29105"/>
        <note>catalytic</note>
    </ligand>
</feature>
<feature type="binding site" evidence="1">
    <location>
        <position position="676"/>
    </location>
    <ligand>
        <name>Zn(2+)</name>
        <dbReference type="ChEBI" id="CHEBI:29105"/>
        <note>catalytic</note>
    </ligand>
</feature>
<feature type="sequence conflict" description="In Ref. 5; CM000142." evidence="4" ref="5">
    <original>L</original>
    <variation>P</variation>
    <location>
        <position position="373"/>
    </location>
</feature>
<feature type="sequence conflict" description="In Ref. 5; CM000142." evidence="4" ref="5">
    <original>V</original>
    <variation>L</variation>
    <location>
        <position position="394"/>
    </location>
</feature>
<reference key="1">
    <citation type="journal article" date="2005" name="Mol. Genet. Genomics">
        <title>A fine physical map of the rice chromosome 5.</title>
        <authorList>
            <person name="Cheng C.-H."/>
            <person name="Chung M.C."/>
            <person name="Liu S.-M."/>
            <person name="Chen S.-K."/>
            <person name="Kao F.Y."/>
            <person name="Lin S.-J."/>
            <person name="Hsiao S.-H."/>
            <person name="Tseng I.C."/>
            <person name="Hsing Y.-I.C."/>
            <person name="Wu H.-P."/>
            <person name="Chen C.-S."/>
            <person name="Shaw J.-F."/>
            <person name="Wu J."/>
            <person name="Matsumoto T."/>
            <person name="Sasaki T."/>
            <person name="Chen H.-C."/>
            <person name="Chow T.-Y."/>
        </authorList>
    </citation>
    <scope>NUCLEOTIDE SEQUENCE [LARGE SCALE GENOMIC DNA]</scope>
    <source>
        <strain>cv. Nipponbare</strain>
    </source>
</reference>
<reference key="2">
    <citation type="journal article" date="2005" name="Nature">
        <title>The map-based sequence of the rice genome.</title>
        <authorList>
            <consortium name="International rice genome sequencing project (IRGSP)"/>
        </authorList>
    </citation>
    <scope>NUCLEOTIDE SEQUENCE [LARGE SCALE GENOMIC DNA]</scope>
    <source>
        <strain>cv. Nipponbare</strain>
    </source>
</reference>
<reference key="3">
    <citation type="journal article" date="2008" name="Nucleic Acids Res.">
        <title>The rice annotation project database (RAP-DB): 2008 update.</title>
        <authorList>
            <consortium name="The rice annotation project (RAP)"/>
        </authorList>
    </citation>
    <scope>GENOME REANNOTATION</scope>
    <source>
        <strain>cv. Nipponbare</strain>
    </source>
</reference>
<reference key="4">
    <citation type="journal article" date="2013" name="Rice">
        <title>Improvement of the Oryza sativa Nipponbare reference genome using next generation sequence and optical map data.</title>
        <authorList>
            <person name="Kawahara Y."/>
            <person name="de la Bastide M."/>
            <person name="Hamilton J.P."/>
            <person name="Kanamori H."/>
            <person name="McCombie W.R."/>
            <person name="Ouyang S."/>
            <person name="Schwartz D.C."/>
            <person name="Tanaka T."/>
            <person name="Wu J."/>
            <person name="Zhou S."/>
            <person name="Childs K.L."/>
            <person name="Davidson R.M."/>
            <person name="Lin H."/>
            <person name="Quesada-Ocampo L."/>
            <person name="Vaillancourt B."/>
            <person name="Sakai H."/>
            <person name="Lee S.S."/>
            <person name="Kim J."/>
            <person name="Numa H."/>
            <person name="Itoh T."/>
            <person name="Buell C.R."/>
            <person name="Matsumoto T."/>
        </authorList>
    </citation>
    <scope>GENOME REANNOTATION</scope>
    <source>
        <strain>cv. Nipponbare</strain>
    </source>
</reference>
<reference key="5">
    <citation type="journal article" date="2005" name="PLoS Biol.">
        <title>The genomes of Oryza sativa: a history of duplications.</title>
        <authorList>
            <person name="Yu J."/>
            <person name="Wang J."/>
            <person name="Lin W."/>
            <person name="Li S."/>
            <person name="Li H."/>
            <person name="Zhou J."/>
            <person name="Ni P."/>
            <person name="Dong W."/>
            <person name="Hu S."/>
            <person name="Zeng C."/>
            <person name="Zhang J."/>
            <person name="Zhang Y."/>
            <person name="Li R."/>
            <person name="Xu Z."/>
            <person name="Li S."/>
            <person name="Li X."/>
            <person name="Zheng H."/>
            <person name="Cong L."/>
            <person name="Lin L."/>
            <person name="Yin J."/>
            <person name="Geng J."/>
            <person name="Li G."/>
            <person name="Shi J."/>
            <person name="Liu J."/>
            <person name="Lv H."/>
            <person name="Li J."/>
            <person name="Wang J."/>
            <person name="Deng Y."/>
            <person name="Ran L."/>
            <person name="Shi X."/>
            <person name="Wang X."/>
            <person name="Wu Q."/>
            <person name="Li C."/>
            <person name="Ren X."/>
            <person name="Wang J."/>
            <person name="Wang X."/>
            <person name="Li D."/>
            <person name="Liu D."/>
            <person name="Zhang X."/>
            <person name="Ji Z."/>
            <person name="Zhao W."/>
            <person name="Sun Y."/>
            <person name="Zhang Z."/>
            <person name="Bao J."/>
            <person name="Han Y."/>
            <person name="Dong L."/>
            <person name="Ji J."/>
            <person name="Chen P."/>
            <person name="Wu S."/>
            <person name="Liu J."/>
            <person name="Xiao Y."/>
            <person name="Bu D."/>
            <person name="Tan J."/>
            <person name="Yang L."/>
            <person name="Ye C."/>
            <person name="Zhang J."/>
            <person name="Xu J."/>
            <person name="Zhou Y."/>
            <person name="Yu Y."/>
            <person name="Zhang B."/>
            <person name="Zhuang S."/>
            <person name="Wei H."/>
            <person name="Liu B."/>
            <person name="Lei M."/>
            <person name="Yu H."/>
            <person name="Li Y."/>
            <person name="Xu H."/>
            <person name="Wei S."/>
            <person name="He X."/>
            <person name="Fang L."/>
            <person name="Zhang Z."/>
            <person name="Zhang Y."/>
            <person name="Huang X."/>
            <person name="Su Z."/>
            <person name="Tong W."/>
            <person name="Li J."/>
            <person name="Tong Z."/>
            <person name="Li S."/>
            <person name="Ye J."/>
            <person name="Wang L."/>
            <person name="Fang L."/>
            <person name="Lei T."/>
            <person name="Chen C.-S."/>
            <person name="Chen H.-C."/>
            <person name="Xu Z."/>
            <person name="Li H."/>
            <person name="Huang H."/>
            <person name="Zhang F."/>
            <person name="Xu H."/>
            <person name="Li N."/>
            <person name="Zhao C."/>
            <person name="Li S."/>
            <person name="Dong L."/>
            <person name="Huang Y."/>
            <person name="Li L."/>
            <person name="Xi Y."/>
            <person name="Qi Q."/>
            <person name="Li W."/>
            <person name="Zhang B."/>
            <person name="Hu W."/>
            <person name="Zhang Y."/>
            <person name="Tian X."/>
            <person name="Jiao Y."/>
            <person name="Liang X."/>
            <person name="Jin J."/>
            <person name="Gao L."/>
            <person name="Zheng W."/>
            <person name="Hao B."/>
            <person name="Liu S.-M."/>
            <person name="Wang W."/>
            <person name="Yuan L."/>
            <person name="Cao M."/>
            <person name="McDermott J."/>
            <person name="Samudrala R."/>
            <person name="Wang J."/>
            <person name="Wong G.K.-S."/>
            <person name="Yang H."/>
        </authorList>
    </citation>
    <scope>NUCLEOTIDE SEQUENCE [LARGE SCALE GENOMIC DNA]</scope>
    <source>
        <strain>cv. Nipponbare</strain>
    </source>
</reference>
<reference key="6">
    <citation type="journal article" date="2005" name="Plant Physiol.">
        <title>Functional redundancy of AtFtsH metalloproteases in thylakoid membrane complexes.</title>
        <authorList>
            <person name="Yu F."/>
            <person name="Park S."/>
            <person name="Rodermel S.R."/>
        </authorList>
    </citation>
    <scope>GENE FAMILY</scope>
    <scope>NOMENCLATURE</scope>
</reference>
<protein>
    <recommendedName>
        <fullName>ATP-dependent zinc metalloprotease FTSH 8, mitochondrial</fullName>
        <shortName>OsFTSH8</shortName>
        <ecNumber>3.4.24.-</ecNumber>
    </recommendedName>
</protein>
<gene>
    <name type="primary">FTSH8</name>
    <name type="ordered locus">Os05g0458400</name>
    <name type="ordered locus">LOC_Os05g38400</name>
    <name type="ORF">OJ1362_D02.8</name>
    <name type="ORF">OsJ_018045</name>
</gene>
<name>FTSH8_ORYSJ</name>
<proteinExistence type="inferred from homology"/>